<proteinExistence type="evidence at protein level"/>
<evidence type="ECO:0000269" key="1">
    <source>
    </source>
</evidence>
<evidence type="ECO:0000269" key="2">
    <source>
    </source>
</evidence>
<evidence type="ECO:0000269" key="3">
    <source>
    </source>
</evidence>
<evidence type="ECO:0000269" key="4">
    <source>
    </source>
</evidence>
<evidence type="ECO:0000303" key="5">
    <source>
    </source>
</evidence>
<evidence type="ECO:0000303" key="6">
    <source>
    </source>
</evidence>
<evidence type="ECO:0000305" key="7"/>
<evidence type="ECO:0000305" key="8">
    <source>
    </source>
</evidence>
<evidence type="ECO:0000305" key="9">
    <source>
    </source>
</evidence>
<evidence type="ECO:0007744" key="10">
    <source>
    </source>
</evidence>
<evidence type="ECO:0007744" key="11">
    <source>
    </source>
</evidence>
<organism>
    <name type="scientific">Saccharomyces cerevisiae (strain ATCC 204508 / S288c)</name>
    <name type="common">Baker's yeast</name>
    <dbReference type="NCBI Taxonomy" id="559292"/>
    <lineage>
        <taxon>Eukaryota</taxon>
        <taxon>Fungi</taxon>
        <taxon>Dikarya</taxon>
        <taxon>Ascomycota</taxon>
        <taxon>Saccharomycotina</taxon>
        <taxon>Saccharomycetes</taxon>
        <taxon>Saccharomycetales</taxon>
        <taxon>Saccharomycetaceae</taxon>
        <taxon>Saccharomyces</taxon>
    </lineage>
</organism>
<comment type="function">
    <text evidence="8">Component of the ribosome, a large ribonucleoprotein complex responsible for the synthesis of proteins in the cell. The small ribosomal subunit (SSU) binds messenger RNAs (mRNAs) and translates the encoded message by selecting cognate aminoacyl-transfer RNA (tRNA) molecules. The large subunit (LSU) contains the ribosomal catalytic site termed the peptidyl transferase center (PTC), which catalyzes the formation of peptide bonds, thereby polymerizing the amino acids delivered by tRNAs into a polypeptide chain. The nascent polypeptides leave the ribosome through a tunnel in the LSU and interact with protein factors that function in enzymatic processing, targeting, and the membrane insertion of nascent chains at the exit of the ribosomal tunnel.</text>
</comment>
<comment type="subunit">
    <text evidence="4 9">Component of the small ribosomal subunit (SSU). Mature yeast ribosomes consist of a small (40S) and a large (60S) subunit. The 40S small subunit contains 1 molecule of ribosomal RNA (18S rRNA) and 33 different proteins (encoded by 57 genes). The large 60S subunit contains 3 rRNA molecules (25S, 5.8S and 5S rRNA) and 46 different proteins (encoded by 81 genes) (PubMed:22096102, PubMed:9559554).</text>
</comment>
<comment type="subcellular location">
    <subcellularLocation>
        <location evidence="1 4">Cytoplasm</location>
    </subcellularLocation>
</comment>
<comment type="PTM">
    <text evidence="3">N-terminally acetylated by acetyltransferase NatA.</text>
</comment>
<comment type="miscellaneous">
    <text evidence="2">Present with 1200 molecules/cell in log phase SD medium.</text>
</comment>
<comment type="miscellaneous">
    <text evidence="7">There are 2 genes for uS17 in yeast.</text>
</comment>
<comment type="similarity">
    <text evidence="7">Belongs to the universal ribosomal protein uS17 family.</text>
</comment>
<comment type="sequence caution" evidence="7">
    <conflict type="erroneous gene model prediction">
        <sequence resource="EMBL-CDS" id="CAA86390"/>
    </conflict>
</comment>
<keyword id="KW-0007">Acetylation</keyword>
<keyword id="KW-0963">Cytoplasm</keyword>
<keyword id="KW-0903">Direct protein sequencing</keyword>
<keyword id="KW-1017">Isopeptide bond</keyword>
<keyword id="KW-1185">Reference proteome</keyword>
<keyword id="KW-0687">Ribonucleoprotein</keyword>
<keyword id="KW-0689">Ribosomal protein</keyword>
<keyword id="KW-0694">RNA-binding</keyword>
<keyword id="KW-0699">rRNA-binding</keyword>
<keyword id="KW-0832">Ubl conjugation</keyword>
<feature type="initiator methionine" description="Removed" evidence="3 11">
    <location>
        <position position="1"/>
    </location>
</feature>
<feature type="chain" id="PRO_0000409770" description="Small ribosomal subunit protein uS17B">
    <location>
        <begin position="2"/>
        <end position="156"/>
    </location>
</feature>
<feature type="modified residue" description="N-acetylserine" evidence="3 11">
    <location>
        <position position="2"/>
    </location>
</feature>
<feature type="cross-link" description="Glycyl lysine isopeptide (Lys-Gly) (interchain with G-Cter in ubiquitin)" evidence="10">
    <location>
        <position position="15"/>
    </location>
</feature>
<feature type="cross-link" description="Glycyl lysine isopeptide (Lys-Gly) (interchain with G-Cter in ubiquitin)" evidence="10">
    <location>
        <position position="46"/>
    </location>
</feature>
<feature type="cross-link" description="Glycyl lysine isopeptide (Lys-Gly) (interchain with G-Cter in ubiquitin)" evidence="10">
    <location>
        <position position="56"/>
    </location>
</feature>
<feature type="cross-link" description="Glycyl lysine isopeptide (Lys-Gly) (interchain with G-Cter in ubiquitin)" evidence="10">
    <location>
        <position position="57"/>
    </location>
</feature>
<feature type="cross-link" description="Glycyl lysine isopeptide (Lys-Gly) (interchain with G-Cter in ubiquitin)" evidence="10">
    <location>
        <position position="79"/>
    </location>
</feature>
<feature type="cross-link" description="Glycyl lysine isopeptide (Lys-Gly) (interchain with G-Cter in ubiquitin)" evidence="10">
    <location>
        <position position="96"/>
    </location>
</feature>
<feature type="cross-link" description="Glycyl lysine isopeptide (Lys-Gly) (interchain with G-Cter in ubiquitin)" evidence="10">
    <location>
        <position position="105"/>
    </location>
</feature>
<feature type="cross-link" description="Glycyl lysine isopeptide (Lys-Gly) (interchain with G-Cter in ubiquitin)" evidence="10">
    <location>
        <position position="133"/>
    </location>
</feature>
<feature type="cross-link" description="Glycyl lysine isopeptide (Lys-Gly) (interchain with G-Cter in ubiquitin)" evidence="10">
    <location>
        <position position="141"/>
    </location>
</feature>
<feature type="cross-link" description="Glycyl lysine isopeptide (Lys-Gly) (interchain with G-Cter in ubiquitin)" evidence="10">
    <location>
        <position position="148"/>
    </location>
</feature>
<feature type="sequence conflict" description="In Ref. 5; AA sequence." evidence="7" ref="5">
    <original>AF</original>
    <variation>FA</variation>
    <location>
        <begin position="12"/>
        <end position="13"/>
    </location>
</feature>
<protein>
    <recommendedName>
        <fullName evidence="5">Small ribosomal subunit protein uS17B</fullName>
    </recommendedName>
    <alternativeName>
        <fullName evidence="6">40S ribosomal protein S11-B</fullName>
    </alternativeName>
    <alternativeName>
        <fullName>RP41</fullName>
    </alternativeName>
    <alternativeName>
        <fullName>S18</fullName>
    </alternativeName>
    <alternativeName>
        <fullName>YS12</fullName>
    </alternativeName>
</protein>
<accession>P0CX48</accession>
<accession>D6VQ48</accession>
<accession>O11852</accession>
<accession>P26781</accession>
<dbReference type="EMBL" id="L17004">
    <property type="protein sequence ID" value="AAC37410.1"/>
    <property type="molecule type" value="Unassigned_DNA"/>
</dbReference>
<dbReference type="EMBL" id="Z46260">
    <property type="protein sequence ID" value="CAA86390.1"/>
    <property type="status" value="ALT_SEQ"/>
    <property type="molecule type" value="Genomic_DNA"/>
</dbReference>
<dbReference type="EMBL" id="Z35917">
    <property type="protein sequence ID" value="CAA84990.1"/>
    <property type="molecule type" value="Genomic_DNA"/>
</dbReference>
<dbReference type="EMBL" id="Z35918">
    <property type="protein sequence ID" value="CAA84991.1"/>
    <property type="molecule type" value="Genomic_DNA"/>
</dbReference>
<dbReference type="EMBL" id="BK006936">
    <property type="protein sequence ID" value="DAA07168.1"/>
    <property type="molecule type" value="Genomic_DNA"/>
</dbReference>
<dbReference type="PIR" id="S41784">
    <property type="entry name" value="S41784"/>
</dbReference>
<dbReference type="RefSeq" id="NP_009604.1">
    <property type="nucleotide sequence ID" value="NM_001178396.1"/>
</dbReference>
<dbReference type="SMR" id="P0CX48"/>
<dbReference type="BioGRID" id="32075">
    <property type="interactions" value="271"/>
</dbReference>
<dbReference type="BioGRID" id="32750">
    <property type="interactions" value="354"/>
</dbReference>
<dbReference type="ComplexPortal" id="CPX-1599">
    <property type="entry name" value="40S cytosolic small ribosomal subunit"/>
</dbReference>
<dbReference type="FunCoup" id="P0CX48">
    <property type="interactions" value="1125"/>
</dbReference>
<dbReference type="IntAct" id="P0CX48">
    <property type="interactions" value="8"/>
</dbReference>
<dbReference type="MINT" id="P0CX48"/>
<dbReference type="CarbonylDB" id="P0CX48"/>
<dbReference type="iPTMnet" id="P0CX48"/>
<dbReference type="EnsemblFungi" id="YBR048W_mRNA">
    <property type="protein sequence ID" value="YBR048W"/>
    <property type="gene ID" value="YBR048W"/>
</dbReference>
<dbReference type="EnsemblFungi" id="YDR025W_mRNA">
    <property type="protein sequence ID" value="YDR025W"/>
    <property type="gene ID" value="YDR025W"/>
</dbReference>
<dbReference type="GeneID" id="852337"/>
<dbReference type="KEGG" id="sce:YBR048W"/>
<dbReference type="KEGG" id="sce:YDR025W"/>
<dbReference type="AGR" id="SGD:S000000252"/>
<dbReference type="SGD" id="S000000252">
    <property type="gene designation" value="RPS11B"/>
</dbReference>
<dbReference type="VEuPathDB" id="FungiDB:YBR048W"/>
<dbReference type="VEuPathDB" id="FungiDB:YDR025W"/>
<dbReference type="GeneTree" id="ENSGT00390000002732"/>
<dbReference type="HOGENOM" id="CLU_073626_0_2_1"/>
<dbReference type="InParanoid" id="P0CX48"/>
<dbReference type="OMA" id="DYEKCPF"/>
<dbReference type="OrthoDB" id="10254436at2759"/>
<dbReference type="BioCyc" id="YEAST:G3O-29020-MONOMER"/>
<dbReference type="Reactome" id="R-SCE-156827">
    <property type="pathway name" value="L13a-mediated translational silencing of Ceruloplasmin expression"/>
</dbReference>
<dbReference type="Reactome" id="R-SCE-1799339">
    <property type="pathway name" value="SRP-dependent cotranslational protein targeting to membrane"/>
</dbReference>
<dbReference type="Reactome" id="R-SCE-72649">
    <property type="pathway name" value="Translation initiation complex formation"/>
</dbReference>
<dbReference type="Reactome" id="R-SCE-72689">
    <property type="pathway name" value="Formation of a pool of free 40S subunits"/>
</dbReference>
<dbReference type="Reactome" id="R-SCE-72695">
    <property type="pathway name" value="Formation of the ternary complex, and subsequently, the 43S complex"/>
</dbReference>
<dbReference type="Reactome" id="R-SCE-72702">
    <property type="pathway name" value="Ribosomal scanning and start codon recognition"/>
</dbReference>
<dbReference type="Reactome" id="R-SCE-72706">
    <property type="pathway name" value="GTP hydrolysis and joining of the 60S ribosomal subunit"/>
</dbReference>
<dbReference type="Reactome" id="R-SCE-975956">
    <property type="pathway name" value="Nonsense Mediated Decay (NMD) independent of the Exon Junction Complex (EJC)"/>
</dbReference>
<dbReference type="Reactome" id="R-SCE-975957">
    <property type="pathway name" value="Nonsense Mediated Decay (NMD) enhanced by the Exon Junction Complex (EJC)"/>
</dbReference>
<dbReference type="BioGRID-ORCS" id="851589">
    <property type="hits" value="0 hits in 10 CRISPR screens"/>
</dbReference>
<dbReference type="BioGRID-ORCS" id="852337">
    <property type="hits" value="8 hits in 10 CRISPR screens"/>
</dbReference>
<dbReference type="PRO" id="PR:P0CX48"/>
<dbReference type="Proteomes" id="UP000002311">
    <property type="component" value="Chromosome II"/>
</dbReference>
<dbReference type="RNAct" id="P0CX48">
    <property type="molecule type" value="protein"/>
</dbReference>
<dbReference type="ExpressionAtlas" id="P0CX48">
    <property type="expression patterns" value="baseline and differential"/>
</dbReference>
<dbReference type="GO" id="GO:0030686">
    <property type="term" value="C:90S preribosome"/>
    <property type="evidence" value="ECO:0007005"/>
    <property type="project" value="SGD"/>
</dbReference>
<dbReference type="GO" id="GO:0005829">
    <property type="term" value="C:cytosol"/>
    <property type="evidence" value="ECO:0000304"/>
    <property type="project" value="Reactome"/>
</dbReference>
<dbReference type="GO" id="GO:0022627">
    <property type="term" value="C:cytosolic small ribosomal subunit"/>
    <property type="evidence" value="ECO:0000314"/>
    <property type="project" value="SGD"/>
</dbReference>
<dbReference type="GO" id="GO:0019843">
    <property type="term" value="F:rRNA binding"/>
    <property type="evidence" value="ECO:0007669"/>
    <property type="project" value="UniProtKB-KW"/>
</dbReference>
<dbReference type="GO" id="GO:0003735">
    <property type="term" value="F:structural constituent of ribosome"/>
    <property type="evidence" value="ECO:0000314"/>
    <property type="project" value="SGD"/>
</dbReference>
<dbReference type="GO" id="GO:0000462">
    <property type="term" value="P:maturation of SSU-rRNA from tricistronic rRNA transcript (SSU-rRNA, 5.8S rRNA, LSU-rRNA)"/>
    <property type="evidence" value="ECO:0000316"/>
    <property type="project" value="SGD"/>
</dbReference>
<dbReference type="GO" id="GO:0000028">
    <property type="term" value="P:ribosomal small subunit assembly"/>
    <property type="evidence" value="ECO:0000315"/>
    <property type="project" value="SGD"/>
</dbReference>
<dbReference type="GO" id="GO:0006412">
    <property type="term" value="P:translation"/>
    <property type="evidence" value="ECO:0007669"/>
    <property type="project" value="InterPro"/>
</dbReference>
<dbReference type="CDD" id="cd00364">
    <property type="entry name" value="Ribosomal_uS17"/>
    <property type="match status" value="1"/>
</dbReference>
<dbReference type="FunFam" id="2.40.50.1000:FF:000001">
    <property type="entry name" value="40S ribosomal protein S11"/>
    <property type="match status" value="1"/>
</dbReference>
<dbReference type="Gene3D" id="2.40.50.1000">
    <property type="match status" value="1"/>
</dbReference>
<dbReference type="InterPro" id="IPR012340">
    <property type="entry name" value="NA-bd_OB-fold"/>
</dbReference>
<dbReference type="InterPro" id="IPR000266">
    <property type="entry name" value="Ribosomal_uS17"/>
</dbReference>
<dbReference type="InterPro" id="IPR028333">
    <property type="entry name" value="Ribosomal_uS17_arc/euk"/>
</dbReference>
<dbReference type="InterPro" id="IPR019979">
    <property type="entry name" value="Ribosomal_uS17_CS"/>
</dbReference>
<dbReference type="InterPro" id="IPR032440">
    <property type="entry name" value="Ribosomal_uS17_N"/>
</dbReference>
<dbReference type="NCBIfam" id="NF006345">
    <property type="entry name" value="PRK08572.1"/>
    <property type="match status" value="1"/>
</dbReference>
<dbReference type="NCBIfam" id="TIGR03630">
    <property type="entry name" value="uS17_arch"/>
    <property type="match status" value="1"/>
</dbReference>
<dbReference type="PANTHER" id="PTHR10744">
    <property type="entry name" value="40S RIBOSOMAL PROTEIN S11 FAMILY MEMBER"/>
    <property type="match status" value="1"/>
</dbReference>
<dbReference type="PANTHER" id="PTHR10744:SF9">
    <property type="entry name" value="40S RIBOSOMAL PROTEIN S11-RELATED"/>
    <property type="match status" value="1"/>
</dbReference>
<dbReference type="Pfam" id="PF00366">
    <property type="entry name" value="Ribosomal_S17"/>
    <property type="match status" value="1"/>
</dbReference>
<dbReference type="Pfam" id="PF16205">
    <property type="entry name" value="Ribosomal_S17_N"/>
    <property type="match status" value="1"/>
</dbReference>
<dbReference type="PRINTS" id="PR00973">
    <property type="entry name" value="RIBOSOMALS17"/>
</dbReference>
<dbReference type="SUPFAM" id="SSF50249">
    <property type="entry name" value="Nucleic acid-binding proteins"/>
    <property type="match status" value="1"/>
</dbReference>
<dbReference type="PROSITE" id="PS00056">
    <property type="entry name" value="RIBOSOMAL_S17"/>
    <property type="match status" value="1"/>
</dbReference>
<name>RS11B_YEAST</name>
<reference key="1">
    <citation type="journal article" date="1994" name="Genetics">
        <title>Reduced dosage of genes encoding ribosomal protein S18 suppresses a mitochondrial initiation codon mutation in Saccharomyces cerevisiae.</title>
        <authorList>
            <person name="Folley L.S."/>
            <person name="Fox T.D."/>
        </authorList>
    </citation>
    <scope>NUCLEOTIDE SEQUENCE [GENOMIC DNA]</scope>
    <source>
        <strain>ATCC 204508 / S288c</strain>
    </source>
</reference>
<reference key="2">
    <citation type="journal article" date="1995" name="Yeast">
        <title>Sequence and analysis of 24 kb on chromosome II of Saccharomyces cerevisiae.</title>
        <authorList>
            <person name="Aljinovic G."/>
            <person name="Pohl T.M."/>
        </authorList>
    </citation>
    <scope>NUCLEOTIDE SEQUENCE [GENOMIC DNA]</scope>
    <source>
        <strain>ATCC 204508 / S288c</strain>
    </source>
</reference>
<reference key="3">
    <citation type="journal article" date="1994" name="EMBO J.">
        <title>Complete DNA sequence of yeast chromosome II.</title>
        <authorList>
            <person name="Feldmann H."/>
            <person name="Aigle M."/>
            <person name="Aljinovic G."/>
            <person name="Andre B."/>
            <person name="Baclet M.C."/>
            <person name="Barthe C."/>
            <person name="Baur A."/>
            <person name="Becam A.-M."/>
            <person name="Biteau N."/>
            <person name="Boles E."/>
            <person name="Brandt T."/>
            <person name="Brendel M."/>
            <person name="Brueckner M."/>
            <person name="Bussereau F."/>
            <person name="Christiansen C."/>
            <person name="Contreras R."/>
            <person name="Crouzet M."/>
            <person name="Cziepluch C."/>
            <person name="Demolis N."/>
            <person name="Delaveau T."/>
            <person name="Doignon F."/>
            <person name="Domdey H."/>
            <person name="Duesterhus S."/>
            <person name="Dubois E."/>
            <person name="Dujon B."/>
            <person name="El Bakkoury M."/>
            <person name="Entian K.-D."/>
            <person name="Feuermann M."/>
            <person name="Fiers W."/>
            <person name="Fobo G.M."/>
            <person name="Fritz C."/>
            <person name="Gassenhuber J."/>
            <person name="Glansdorff N."/>
            <person name="Goffeau A."/>
            <person name="Grivell L.A."/>
            <person name="de Haan M."/>
            <person name="Hein C."/>
            <person name="Herbert C.J."/>
            <person name="Hollenberg C.P."/>
            <person name="Holmstroem K."/>
            <person name="Jacq C."/>
            <person name="Jacquet M."/>
            <person name="Jauniaux J.-C."/>
            <person name="Jonniaux J.-L."/>
            <person name="Kallesoee T."/>
            <person name="Kiesau P."/>
            <person name="Kirchrath L."/>
            <person name="Koetter P."/>
            <person name="Korol S."/>
            <person name="Liebl S."/>
            <person name="Logghe M."/>
            <person name="Lohan A.J.E."/>
            <person name="Louis E.J."/>
            <person name="Li Z.Y."/>
            <person name="Maat M.J."/>
            <person name="Mallet L."/>
            <person name="Mannhaupt G."/>
            <person name="Messenguy F."/>
            <person name="Miosga T."/>
            <person name="Molemans F."/>
            <person name="Mueller S."/>
            <person name="Nasr F."/>
            <person name="Obermaier B."/>
            <person name="Perea J."/>
            <person name="Pierard A."/>
            <person name="Piravandi E."/>
            <person name="Pohl F.M."/>
            <person name="Pohl T.M."/>
            <person name="Potier S."/>
            <person name="Proft M."/>
            <person name="Purnelle B."/>
            <person name="Ramezani Rad M."/>
            <person name="Rieger M."/>
            <person name="Rose M."/>
            <person name="Schaaff-Gerstenschlaeger I."/>
            <person name="Scherens B."/>
            <person name="Schwarzlose C."/>
            <person name="Skala J."/>
            <person name="Slonimski P.P."/>
            <person name="Smits P.H.M."/>
            <person name="Souciet J.-L."/>
            <person name="Steensma H.Y."/>
            <person name="Stucka R."/>
            <person name="Urrestarazu L.A."/>
            <person name="van der Aart Q.J.M."/>
            <person name="Van Dyck L."/>
            <person name="Vassarotti A."/>
            <person name="Vetter I."/>
            <person name="Vierendeels F."/>
            <person name="Vissers S."/>
            <person name="Wagner G."/>
            <person name="de Wergifosse P."/>
            <person name="Wolfe K.H."/>
            <person name="Zagulski M."/>
            <person name="Zimmermann F.K."/>
            <person name="Mewes H.-W."/>
            <person name="Kleine K."/>
        </authorList>
    </citation>
    <scope>NUCLEOTIDE SEQUENCE [LARGE SCALE GENOMIC DNA]</scope>
    <source>
        <strain>ATCC 204508 / S288c</strain>
    </source>
</reference>
<reference key="4">
    <citation type="journal article" date="2014" name="G3 (Bethesda)">
        <title>The reference genome sequence of Saccharomyces cerevisiae: Then and now.</title>
        <authorList>
            <person name="Engel S.R."/>
            <person name="Dietrich F.S."/>
            <person name="Fisk D.G."/>
            <person name="Binkley G."/>
            <person name="Balakrishnan R."/>
            <person name="Costanzo M.C."/>
            <person name="Dwight S.S."/>
            <person name="Hitz B.C."/>
            <person name="Karra K."/>
            <person name="Nash R.S."/>
            <person name="Weng S."/>
            <person name="Wong E.D."/>
            <person name="Lloyd P."/>
            <person name="Skrzypek M.S."/>
            <person name="Miyasato S.R."/>
            <person name="Simison M."/>
            <person name="Cherry J.M."/>
        </authorList>
    </citation>
    <scope>GENOME REANNOTATION</scope>
    <source>
        <strain>ATCC 204508 / S288c</strain>
    </source>
</reference>
<reference key="5">
    <citation type="journal article" date="1992" name="J. Biol. Chem.">
        <title>NH2-terminal acetylation of ribosomal proteins of Saccharomyces cerevisiae.</title>
        <authorList>
            <person name="Takakura H."/>
            <person name="Tsunasawa S."/>
            <person name="Miyagi M."/>
            <person name="Warner J.R."/>
        </authorList>
    </citation>
    <scope>PROTEIN SEQUENCE OF 2-21</scope>
    <scope>ACETYLATION AT SER-2 BY NATA</scope>
</reference>
<reference key="6">
    <citation type="journal article" date="1998" name="Yeast">
        <title>The list of cytoplasmic ribosomal proteins of Saccharomyces cerevisiae.</title>
        <authorList>
            <person name="Planta R.J."/>
            <person name="Mager W.H."/>
        </authorList>
    </citation>
    <scope>NOMENCLATURE</scope>
    <scope>SUBUNIT</scope>
</reference>
<reference key="7">
    <citation type="journal article" date="2003" name="Nature">
        <title>Global analysis of protein localization in budding yeast.</title>
        <authorList>
            <person name="Huh W.-K."/>
            <person name="Falvo J.V."/>
            <person name="Gerke L.C."/>
            <person name="Carroll A.S."/>
            <person name="Howson R.W."/>
            <person name="Weissman J.S."/>
            <person name="O'Shea E.K."/>
        </authorList>
    </citation>
    <scope>SUBCELLULAR LOCATION [LARGE SCALE ANALYSIS]</scope>
</reference>
<reference key="8">
    <citation type="journal article" date="2003" name="Nature">
        <title>Global analysis of protein expression in yeast.</title>
        <authorList>
            <person name="Ghaemmaghami S."/>
            <person name="Huh W.-K."/>
            <person name="Bower K."/>
            <person name="Howson R.W."/>
            <person name="Belle A."/>
            <person name="Dephoure N."/>
            <person name="O'Shea E.K."/>
            <person name="Weissman J.S."/>
        </authorList>
    </citation>
    <scope>LEVEL OF PROTEIN EXPRESSION [LARGE SCALE ANALYSIS]</scope>
</reference>
<reference key="9">
    <citation type="journal article" date="2011" name="Science">
        <title>The structure of the eukaryotic ribosome at 3.0 A resolution.</title>
        <authorList>
            <person name="Ben-Shem A."/>
            <person name="Garreau de Loubresse N."/>
            <person name="Melnikov S."/>
            <person name="Jenner L."/>
            <person name="Yusupova G."/>
            <person name="Yusupov M."/>
        </authorList>
    </citation>
    <scope>SUBUNIT</scope>
    <scope>SUBCELLULAR LOCATION</scope>
</reference>
<reference key="10">
    <citation type="journal article" date="2012" name="Proc. Natl. Acad. Sci. U.S.A.">
        <title>N-terminal acetylome analyses and functional insights of the N-terminal acetyltransferase NatB.</title>
        <authorList>
            <person name="Van Damme P."/>
            <person name="Lasa M."/>
            <person name="Polevoda B."/>
            <person name="Gazquez C."/>
            <person name="Elosegui-Artola A."/>
            <person name="Kim D.S."/>
            <person name="De Juan-Pardo E."/>
            <person name="Demeyer K."/>
            <person name="Hole K."/>
            <person name="Larrea E."/>
            <person name="Timmerman E."/>
            <person name="Prieto J."/>
            <person name="Arnesen T."/>
            <person name="Sherman F."/>
            <person name="Gevaert K."/>
            <person name="Aldabe R."/>
        </authorList>
    </citation>
    <scope>ACETYLATION [LARGE SCALE ANALYSIS] AT SER-2</scope>
    <scope>CLEAVAGE OF INITIATOR METHIONINE [LARGE SCALE ANALYSIS]</scope>
    <scope>IDENTIFICATION BY MASS SPECTROMETRY [LARGE SCALE ANALYSIS]</scope>
</reference>
<reference key="11">
    <citation type="journal article" date="2012" name="Proteomics">
        <title>Sites of ubiquitin attachment in Saccharomyces cerevisiae.</title>
        <authorList>
            <person name="Starita L.M."/>
            <person name="Lo R.S."/>
            <person name="Eng J.K."/>
            <person name="von Haller P.D."/>
            <person name="Fields S."/>
        </authorList>
    </citation>
    <scope>UBIQUITINATION [LARGE SCALE ANALYSIS] AT LYS-15; LYS-46; LYS-56; LYS-57; LYS-79; LYS-96; LYS-105; LYS-133; LYS-141 AND LYS-148</scope>
    <scope>IDENTIFICATION BY MASS SPECTROMETRY [LARGE SCALE ANALYSIS]</scope>
</reference>
<reference key="12">
    <citation type="journal article" date="2014" name="Curr. Opin. Struct. Biol.">
        <title>A new system for naming ribosomal proteins.</title>
        <authorList>
            <person name="Ban N."/>
            <person name="Beckmann R."/>
            <person name="Cate J.H.D."/>
            <person name="Dinman J.D."/>
            <person name="Dragon F."/>
            <person name="Ellis S.R."/>
            <person name="Lafontaine D.L.J."/>
            <person name="Lindahl L."/>
            <person name="Liljas A."/>
            <person name="Lipton J.M."/>
            <person name="McAlear M.A."/>
            <person name="Moore P.B."/>
            <person name="Noller H.F."/>
            <person name="Ortega J."/>
            <person name="Panse V.G."/>
            <person name="Ramakrishnan V."/>
            <person name="Spahn C.M.T."/>
            <person name="Steitz T.A."/>
            <person name="Tchorzewski M."/>
            <person name="Tollervey D."/>
            <person name="Warren A.J."/>
            <person name="Williamson J.R."/>
            <person name="Wilson D."/>
            <person name="Yonath A."/>
            <person name="Yusupov M."/>
        </authorList>
    </citation>
    <scope>NOMENCLATURE</scope>
</reference>
<sequence length="156" mass="17749">MSTELTVQSERAFQKQPHIFNNPKVKTSKRTKRWYKNAGLGFKTPKTAIEGSYIDKKCPFTGLVSIRGKILTGTVVSTKMHRTIVIRRAYLHYIPKYNRYEKRHKNVPVHVSPAFRVQVGDIVTVGQCRPISKTVRFNVVKVSAAAGKANKQFAKF</sequence>
<gene>
    <name evidence="6" type="primary">RPS11B</name>
    <name type="synonym">RPS18B</name>
    <name type="ordered locus">YBR048W</name>
    <name type="ORF">YBR0501</name>
</gene>